<name>PRMA_DEIRA</name>
<gene>
    <name evidence="1" type="primary">prmA</name>
    <name type="ordered locus">DR_1521</name>
</gene>
<accession>Q9RU72</accession>
<proteinExistence type="inferred from homology"/>
<sequence>MLVYLLPGSFDTREAHLDLLWEAGATGLEERGPNIRVYFDERTELPAEVADGEWHEEAEQDWQAEFKKNLRPVHAGRVTIVAPWQREEVPAGQLALVIEPGMAFGTGHHATTRMAVEALGELDLSGKRVLDVGTGSGVLAMAAAKLGAAQTLGVDIDPITIPIARDNARDNGLTSGIRFEEGTLGLDEDAEMFGEPYDVLVANLYAELHDLLAGEYAAQLRPGAPLILTGILTSKLPLVRDALDREGFTDVQVRTDSEGAGGEWALVTARRED</sequence>
<protein>
    <recommendedName>
        <fullName evidence="1">Ribosomal protein L11 methyltransferase</fullName>
        <shortName evidence="1">L11 Mtase</shortName>
        <ecNumber evidence="1">2.1.1.-</ecNumber>
    </recommendedName>
</protein>
<organism>
    <name type="scientific">Deinococcus radiodurans (strain ATCC 13939 / DSM 20539 / JCM 16871 / CCUG 27074 / LMG 4051 / NBRC 15346 / NCIMB 9279 / VKM B-1422 / R1)</name>
    <dbReference type="NCBI Taxonomy" id="243230"/>
    <lineage>
        <taxon>Bacteria</taxon>
        <taxon>Thermotogati</taxon>
        <taxon>Deinococcota</taxon>
        <taxon>Deinococci</taxon>
        <taxon>Deinococcales</taxon>
        <taxon>Deinococcaceae</taxon>
        <taxon>Deinococcus</taxon>
    </lineage>
</organism>
<reference key="1">
    <citation type="journal article" date="1999" name="Science">
        <title>Genome sequence of the radioresistant bacterium Deinococcus radiodurans R1.</title>
        <authorList>
            <person name="White O."/>
            <person name="Eisen J.A."/>
            <person name="Heidelberg J.F."/>
            <person name="Hickey E.K."/>
            <person name="Peterson J.D."/>
            <person name="Dodson R.J."/>
            <person name="Haft D.H."/>
            <person name="Gwinn M.L."/>
            <person name="Nelson W.C."/>
            <person name="Richardson D.L."/>
            <person name="Moffat K.S."/>
            <person name="Qin H."/>
            <person name="Jiang L."/>
            <person name="Pamphile W."/>
            <person name="Crosby M."/>
            <person name="Shen M."/>
            <person name="Vamathevan J.J."/>
            <person name="Lam P."/>
            <person name="McDonald L.A."/>
            <person name="Utterback T.R."/>
            <person name="Zalewski C."/>
            <person name="Makarova K.S."/>
            <person name="Aravind L."/>
            <person name="Daly M.J."/>
            <person name="Minton K.W."/>
            <person name="Fleischmann R.D."/>
            <person name="Ketchum K.A."/>
            <person name="Nelson K.E."/>
            <person name="Salzberg S.L."/>
            <person name="Smith H.O."/>
            <person name="Venter J.C."/>
            <person name="Fraser C.M."/>
        </authorList>
    </citation>
    <scope>NUCLEOTIDE SEQUENCE [LARGE SCALE GENOMIC DNA]</scope>
    <source>
        <strain>ATCC 13939 / DSM 20539 / JCM 16871 / CCUG 27074 / LMG 4051 / NBRC 15346 / NCIMB 9279 / VKM B-1422 / R1</strain>
    </source>
</reference>
<keyword id="KW-0963">Cytoplasm</keyword>
<keyword id="KW-0489">Methyltransferase</keyword>
<keyword id="KW-1185">Reference proteome</keyword>
<keyword id="KW-0949">S-adenosyl-L-methionine</keyword>
<keyword id="KW-0808">Transferase</keyword>
<dbReference type="EC" id="2.1.1.-" evidence="1"/>
<dbReference type="EMBL" id="AE000513">
    <property type="protein sequence ID" value="AAF11087.1"/>
    <property type="molecule type" value="Genomic_DNA"/>
</dbReference>
<dbReference type="PIR" id="B75385">
    <property type="entry name" value="B75385"/>
</dbReference>
<dbReference type="RefSeq" id="NP_295244.1">
    <property type="nucleotide sequence ID" value="NC_001263.1"/>
</dbReference>
<dbReference type="RefSeq" id="WP_010888160.1">
    <property type="nucleotide sequence ID" value="NC_001263.1"/>
</dbReference>
<dbReference type="SMR" id="Q9RU72"/>
<dbReference type="FunCoup" id="Q9RU72">
    <property type="interactions" value="266"/>
</dbReference>
<dbReference type="STRING" id="243230.DR_1521"/>
<dbReference type="PaxDb" id="243230-DR_1521"/>
<dbReference type="EnsemblBacteria" id="AAF11087">
    <property type="protein sequence ID" value="AAF11087"/>
    <property type="gene ID" value="DR_1521"/>
</dbReference>
<dbReference type="GeneID" id="69517760"/>
<dbReference type="KEGG" id="dra:DR_1521"/>
<dbReference type="PATRIC" id="fig|243230.17.peg.1723"/>
<dbReference type="eggNOG" id="COG2264">
    <property type="taxonomic scope" value="Bacteria"/>
</dbReference>
<dbReference type="HOGENOM" id="CLU_049382_3_1_0"/>
<dbReference type="InParanoid" id="Q9RU72"/>
<dbReference type="OrthoDB" id="9785995at2"/>
<dbReference type="Proteomes" id="UP000002524">
    <property type="component" value="Chromosome 1"/>
</dbReference>
<dbReference type="GO" id="GO:0005737">
    <property type="term" value="C:cytoplasm"/>
    <property type="evidence" value="ECO:0007669"/>
    <property type="project" value="UniProtKB-SubCell"/>
</dbReference>
<dbReference type="GO" id="GO:0008276">
    <property type="term" value="F:protein methyltransferase activity"/>
    <property type="evidence" value="ECO:0000318"/>
    <property type="project" value="GO_Central"/>
</dbReference>
<dbReference type="GO" id="GO:0016279">
    <property type="term" value="F:protein-lysine N-methyltransferase activity"/>
    <property type="evidence" value="ECO:0007669"/>
    <property type="project" value="RHEA"/>
</dbReference>
<dbReference type="GO" id="GO:0032259">
    <property type="term" value="P:methylation"/>
    <property type="evidence" value="ECO:0007669"/>
    <property type="project" value="UniProtKB-KW"/>
</dbReference>
<dbReference type="CDD" id="cd02440">
    <property type="entry name" value="AdoMet_MTases"/>
    <property type="match status" value="1"/>
</dbReference>
<dbReference type="Gene3D" id="1.20.5.1350">
    <property type="match status" value="1"/>
</dbReference>
<dbReference type="Gene3D" id="3.30.70.1170">
    <property type="entry name" value="Sun protein, domain 3"/>
    <property type="match status" value="1"/>
</dbReference>
<dbReference type="Gene3D" id="3.40.50.150">
    <property type="entry name" value="Vaccinia Virus protein VP39"/>
    <property type="match status" value="1"/>
</dbReference>
<dbReference type="HAMAP" id="MF_00735">
    <property type="entry name" value="Methyltr_PrmA"/>
    <property type="match status" value="1"/>
</dbReference>
<dbReference type="InterPro" id="IPR050078">
    <property type="entry name" value="Ribosomal_L11_MeTrfase_PrmA"/>
</dbReference>
<dbReference type="InterPro" id="IPR004498">
    <property type="entry name" value="Ribosomal_PrmA_MeTrfase"/>
</dbReference>
<dbReference type="InterPro" id="IPR029063">
    <property type="entry name" value="SAM-dependent_MTases_sf"/>
</dbReference>
<dbReference type="NCBIfam" id="NF001790">
    <property type="entry name" value="PRK00517.3-3"/>
    <property type="match status" value="1"/>
</dbReference>
<dbReference type="PANTHER" id="PTHR43648">
    <property type="entry name" value="ELECTRON TRANSFER FLAVOPROTEIN BETA SUBUNIT LYSINE METHYLTRANSFERASE"/>
    <property type="match status" value="1"/>
</dbReference>
<dbReference type="PANTHER" id="PTHR43648:SF1">
    <property type="entry name" value="ELECTRON TRANSFER FLAVOPROTEIN BETA SUBUNIT LYSINE METHYLTRANSFERASE"/>
    <property type="match status" value="1"/>
</dbReference>
<dbReference type="Pfam" id="PF06325">
    <property type="entry name" value="PrmA"/>
    <property type="match status" value="1"/>
</dbReference>
<dbReference type="PIRSF" id="PIRSF000401">
    <property type="entry name" value="RPL11_MTase"/>
    <property type="match status" value="1"/>
</dbReference>
<dbReference type="SUPFAM" id="SSF53335">
    <property type="entry name" value="S-adenosyl-L-methionine-dependent methyltransferases"/>
    <property type="match status" value="1"/>
</dbReference>
<evidence type="ECO:0000255" key="1">
    <source>
        <dbReference type="HAMAP-Rule" id="MF_00735"/>
    </source>
</evidence>
<feature type="chain" id="PRO_0000192255" description="Ribosomal protein L11 methyltransferase">
    <location>
        <begin position="1"/>
        <end position="273"/>
    </location>
</feature>
<feature type="binding site" evidence="1">
    <location>
        <position position="112"/>
    </location>
    <ligand>
        <name>S-adenosyl-L-methionine</name>
        <dbReference type="ChEBI" id="CHEBI:59789"/>
    </ligand>
</feature>
<feature type="binding site" evidence="1">
    <location>
        <position position="133"/>
    </location>
    <ligand>
        <name>S-adenosyl-L-methionine</name>
        <dbReference type="ChEBI" id="CHEBI:59789"/>
    </ligand>
</feature>
<feature type="binding site" evidence="1">
    <location>
        <position position="155"/>
    </location>
    <ligand>
        <name>S-adenosyl-L-methionine</name>
        <dbReference type="ChEBI" id="CHEBI:59789"/>
    </ligand>
</feature>
<feature type="binding site" evidence="1">
    <location>
        <position position="203"/>
    </location>
    <ligand>
        <name>S-adenosyl-L-methionine</name>
        <dbReference type="ChEBI" id="CHEBI:59789"/>
    </ligand>
</feature>
<comment type="function">
    <text evidence="1">Methylates ribosomal protein L11.</text>
</comment>
<comment type="catalytic activity">
    <reaction evidence="1">
        <text>L-lysyl-[protein] + 3 S-adenosyl-L-methionine = N(6),N(6),N(6)-trimethyl-L-lysyl-[protein] + 3 S-adenosyl-L-homocysteine + 3 H(+)</text>
        <dbReference type="Rhea" id="RHEA:54192"/>
        <dbReference type="Rhea" id="RHEA-COMP:9752"/>
        <dbReference type="Rhea" id="RHEA-COMP:13826"/>
        <dbReference type="ChEBI" id="CHEBI:15378"/>
        <dbReference type="ChEBI" id="CHEBI:29969"/>
        <dbReference type="ChEBI" id="CHEBI:57856"/>
        <dbReference type="ChEBI" id="CHEBI:59789"/>
        <dbReference type="ChEBI" id="CHEBI:61961"/>
    </reaction>
</comment>
<comment type="subcellular location">
    <subcellularLocation>
        <location evidence="1">Cytoplasm</location>
    </subcellularLocation>
</comment>
<comment type="similarity">
    <text evidence="1">Belongs to the methyltransferase superfamily. PrmA family.</text>
</comment>